<name>PTH_STAAU</name>
<feature type="chain" id="PRO_0000187819" description="Peptidyl-tRNA hydrolase">
    <location>
        <begin position="1"/>
        <end position="190"/>
    </location>
</feature>
<feature type="active site" description="Proton acceptor" evidence="1">
    <location>
        <position position="19"/>
    </location>
</feature>
<feature type="binding site" evidence="1">
    <location>
        <position position="14"/>
    </location>
    <ligand>
        <name>tRNA</name>
        <dbReference type="ChEBI" id="CHEBI:17843"/>
    </ligand>
</feature>
<feature type="binding site" evidence="1">
    <location>
        <position position="64"/>
    </location>
    <ligand>
        <name>tRNA</name>
        <dbReference type="ChEBI" id="CHEBI:17843"/>
    </ligand>
</feature>
<feature type="binding site" evidence="1">
    <location>
        <position position="66"/>
    </location>
    <ligand>
        <name>tRNA</name>
        <dbReference type="ChEBI" id="CHEBI:17843"/>
    </ligand>
</feature>
<feature type="binding site" evidence="1">
    <location>
        <position position="112"/>
    </location>
    <ligand>
        <name>tRNA</name>
        <dbReference type="ChEBI" id="CHEBI:17843"/>
    </ligand>
</feature>
<feature type="site" description="Discriminates between blocked and unblocked aminoacyl-tRNA" evidence="1">
    <location>
        <position position="9"/>
    </location>
</feature>
<feature type="site" description="Stabilizes the basic form of H active site to accept a proton" evidence="1">
    <location>
        <position position="91"/>
    </location>
</feature>
<evidence type="ECO:0000255" key="1">
    <source>
        <dbReference type="HAMAP-Rule" id="MF_00083"/>
    </source>
</evidence>
<evidence type="ECO:0000269" key="2">
    <source>
    </source>
</evidence>
<evidence type="ECO:0000269" key="3">
    <source>
    </source>
</evidence>
<evidence type="ECO:0000303" key="4">
    <source>
    </source>
</evidence>
<sequence>MKCIVGLGNIGKRFELTRHNIGFEVVDYILEKNNFSLDKQKFKGAYTIERMNGDKVLFIEPMTMMNLSGEAVAPIMDYYNVNPEDLIVLYDDLDLEQGQVRLRQKGSAGGHNGMKSIIKMLGTDQFKRIRIGVGRPTNGMTVPDYVLQRFSNDEMVTMEKVIEHAARAIEKFVETSRFDHVMNEFNGEVK</sequence>
<reference key="1">
    <citation type="journal article" date="2002" name="Protein Expr. Purif.">
        <title>Expression, purification, and characterization of peptidyl-tRNA hydrolase from Staphylococcus aureus.</title>
        <authorList>
            <person name="Bonin P.D."/>
            <person name="Choi G.H."/>
            <person name="Trepod C.M."/>
            <person name="Mott J.E."/>
            <person name="Lyle S.B."/>
            <person name="Cialdella J.I."/>
            <person name="Sarver R.W."/>
            <person name="Marshall V.P."/>
            <person name="Erickson L.A."/>
        </authorList>
    </citation>
    <scope>NUCLEOTIDE SEQUENCE [GENOMIC DNA]</scope>
    <scope>FUNCTION</scope>
    <scope>CATALYTIC ACTIVITY</scope>
    <scope>BIOPHYSICOCHEMICAL PROPERTIES</scope>
    <scope>CIRCULAR DICHROISM ANALYSIS</scope>
    <source>
        <strain evidence="2">ISP3</strain>
    </source>
</reference>
<reference key="2">
    <citation type="journal article" date="2002" name="Anal. Biochem.">
        <title>Development of a fluorescence polarization assay for peptidyl-tRNA hydrolase.</title>
        <authorList>
            <person name="Bonin P.D."/>
            <person name="Erickson L.A."/>
        </authorList>
    </citation>
    <scope>FUNCTION</scope>
    <scope>CATALYTIC ACTIVITY</scope>
    <scope>BIOPHYSICOCHEMICAL PROPERTIES</scope>
    <scope>SUBSTRATE SPECIFICITY</scope>
    <source>
        <strain>ISP3</strain>
    </source>
</reference>
<keyword id="KW-0963">Cytoplasm</keyword>
<keyword id="KW-0378">Hydrolase</keyword>
<keyword id="KW-0694">RNA-binding</keyword>
<keyword id="KW-0820">tRNA-binding</keyword>
<proteinExistence type="evidence at protein level"/>
<accession>Q6YP15</accession>
<organism>
    <name type="scientific">Staphylococcus aureus</name>
    <dbReference type="NCBI Taxonomy" id="1280"/>
    <lineage>
        <taxon>Bacteria</taxon>
        <taxon>Bacillati</taxon>
        <taxon>Bacillota</taxon>
        <taxon>Bacilli</taxon>
        <taxon>Bacillales</taxon>
        <taxon>Staphylococcaceae</taxon>
        <taxon>Staphylococcus</taxon>
    </lineage>
</organism>
<comment type="function">
    <text evidence="1 2 3">Hydrolyzes ribosome-free peptidyl-tRNAs (with 1 or more amino acids incorporated), which drop off the ribosome during protein synthesis, or as a result of ribosome stalling (PubMed:11812233, PubMed:12069408). Hydrolyzes peptidyl-tRNAs and N-blocked aminoacyl-tRNAs but does not hydrolyze unblocked aminoacyl-tRNAs in vitro (PubMed:12069408).</text>
</comment>
<comment type="function">
    <text evidence="1">Catalyzes the release of premature peptidyl moieties from peptidyl-tRNA molecules trapped in stalled 50S ribosomal subunits, and thus maintains levels of free tRNAs and 50S ribosomes.</text>
</comment>
<comment type="catalytic activity">
    <reaction evidence="1 2 3">
        <text>an N-acyl-L-alpha-aminoacyl-tRNA + H2O = an N-acyl-L-amino acid + a tRNA + H(+)</text>
        <dbReference type="Rhea" id="RHEA:54448"/>
        <dbReference type="Rhea" id="RHEA-COMP:10123"/>
        <dbReference type="Rhea" id="RHEA-COMP:13883"/>
        <dbReference type="ChEBI" id="CHEBI:15377"/>
        <dbReference type="ChEBI" id="CHEBI:15378"/>
        <dbReference type="ChEBI" id="CHEBI:59874"/>
        <dbReference type="ChEBI" id="CHEBI:78442"/>
        <dbReference type="ChEBI" id="CHEBI:138191"/>
        <dbReference type="EC" id="3.1.1.29"/>
    </reaction>
</comment>
<comment type="biophysicochemical properties">
    <kinetics>
        <KM evidence="2">2.8 uM for diacetyl-[(3)H]-Lys-tRNA(Lys)</KM>
        <KM evidence="3">127 nM for boron-dipyrromethene (BODIPY) labeled Lys-tRNA(Lys)</KM>
    </kinetics>
    <phDependence>
        <text evidence="2">Optimum pH is 7.0.</text>
    </phDependence>
</comment>
<comment type="subunit">
    <text evidence="1">Monomer.</text>
</comment>
<comment type="subcellular location">
    <subcellularLocation>
        <location evidence="1">Cytoplasm</location>
    </subcellularLocation>
</comment>
<comment type="similarity">
    <text evidence="1">Belongs to the PTH family.</text>
</comment>
<gene>
    <name evidence="1" type="primary">pth</name>
</gene>
<dbReference type="EC" id="3.1.1.29" evidence="1 2 3"/>
<dbReference type="EMBL" id="AY035553">
    <property type="protein sequence ID" value="AAK61416.1"/>
    <property type="molecule type" value="Genomic_DNA"/>
</dbReference>
<dbReference type="RefSeq" id="WP_000649791.1">
    <property type="nucleotide sequence ID" value="NZ_WYDB01000010.1"/>
</dbReference>
<dbReference type="SMR" id="Q6YP15"/>
<dbReference type="OMA" id="PNTYMNL"/>
<dbReference type="BRENDA" id="3.1.1.29">
    <property type="organism ID" value="3352"/>
</dbReference>
<dbReference type="EvolutionaryTrace" id="Q6YP15"/>
<dbReference type="GO" id="GO:0005737">
    <property type="term" value="C:cytoplasm"/>
    <property type="evidence" value="ECO:0007669"/>
    <property type="project" value="UniProtKB-SubCell"/>
</dbReference>
<dbReference type="GO" id="GO:0004045">
    <property type="term" value="F:peptidyl-tRNA hydrolase activity"/>
    <property type="evidence" value="ECO:0007669"/>
    <property type="project" value="UniProtKB-UniRule"/>
</dbReference>
<dbReference type="GO" id="GO:0000049">
    <property type="term" value="F:tRNA binding"/>
    <property type="evidence" value="ECO:0007669"/>
    <property type="project" value="UniProtKB-UniRule"/>
</dbReference>
<dbReference type="GO" id="GO:0006515">
    <property type="term" value="P:protein quality control for misfolded or incompletely synthesized proteins"/>
    <property type="evidence" value="ECO:0007669"/>
    <property type="project" value="UniProtKB-UniRule"/>
</dbReference>
<dbReference type="GO" id="GO:0072344">
    <property type="term" value="P:rescue of stalled ribosome"/>
    <property type="evidence" value="ECO:0007669"/>
    <property type="project" value="UniProtKB-UniRule"/>
</dbReference>
<dbReference type="CDD" id="cd00462">
    <property type="entry name" value="PTH"/>
    <property type="match status" value="1"/>
</dbReference>
<dbReference type="FunFam" id="3.40.50.1470:FF:000001">
    <property type="entry name" value="Peptidyl-tRNA hydrolase"/>
    <property type="match status" value="1"/>
</dbReference>
<dbReference type="Gene3D" id="3.40.50.1470">
    <property type="entry name" value="Peptidyl-tRNA hydrolase"/>
    <property type="match status" value="1"/>
</dbReference>
<dbReference type="HAMAP" id="MF_00083">
    <property type="entry name" value="Pept_tRNA_hydro_bact"/>
    <property type="match status" value="1"/>
</dbReference>
<dbReference type="InterPro" id="IPR001328">
    <property type="entry name" value="Pept_tRNA_hydro"/>
</dbReference>
<dbReference type="InterPro" id="IPR018171">
    <property type="entry name" value="Pept_tRNA_hydro_CS"/>
</dbReference>
<dbReference type="InterPro" id="IPR036416">
    <property type="entry name" value="Pept_tRNA_hydro_sf"/>
</dbReference>
<dbReference type="NCBIfam" id="TIGR00447">
    <property type="entry name" value="pth"/>
    <property type="match status" value="1"/>
</dbReference>
<dbReference type="PANTHER" id="PTHR17224">
    <property type="entry name" value="PEPTIDYL-TRNA HYDROLASE"/>
    <property type="match status" value="1"/>
</dbReference>
<dbReference type="PANTHER" id="PTHR17224:SF1">
    <property type="entry name" value="PEPTIDYL-TRNA HYDROLASE"/>
    <property type="match status" value="1"/>
</dbReference>
<dbReference type="Pfam" id="PF01195">
    <property type="entry name" value="Pept_tRNA_hydro"/>
    <property type="match status" value="1"/>
</dbReference>
<dbReference type="SUPFAM" id="SSF53178">
    <property type="entry name" value="Peptidyl-tRNA hydrolase-like"/>
    <property type="match status" value="1"/>
</dbReference>
<dbReference type="PROSITE" id="PS01195">
    <property type="entry name" value="PEPT_TRNA_HYDROL_1"/>
    <property type="match status" value="1"/>
</dbReference>
<dbReference type="PROSITE" id="PS01196">
    <property type="entry name" value="PEPT_TRNA_HYDROL_2"/>
    <property type="match status" value="1"/>
</dbReference>
<protein>
    <recommendedName>
        <fullName evidence="1 4">Peptidyl-tRNA hydrolase</fullName>
        <shortName evidence="1">Pth</shortName>
        <ecNumber evidence="1 2 3">3.1.1.29</ecNumber>
    </recommendedName>
</protein>